<gene>
    <name evidence="1" type="primary">rpsC</name>
    <name type="ordered locus">SPO0487</name>
</gene>
<reference key="1">
    <citation type="journal article" date="2004" name="Nature">
        <title>Genome sequence of Silicibacter pomeroyi reveals adaptations to the marine environment.</title>
        <authorList>
            <person name="Moran M.A."/>
            <person name="Buchan A."/>
            <person name="Gonzalez J.M."/>
            <person name="Heidelberg J.F."/>
            <person name="Whitman W.B."/>
            <person name="Kiene R.P."/>
            <person name="Henriksen J.R."/>
            <person name="King G.M."/>
            <person name="Belas R."/>
            <person name="Fuqua C."/>
            <person name="Brinkac L.M."/>
            <person name="Lewis M."/>
            <person name="Johri S."/>
            <person name="Weaver B."/>
            <person name="Pai G."/>
            <person name="Eisen J.A."/>
            <person name="Rahe E."/>
            <person name="Sheldon W.M."/>
            <person name="Ye W."/>
            <person name="Miller T.R."/>
            <person name="Carlton J."/>
            <person name="Rasko D.A."/>
            <person name="Paulsen I.T."/>
            <person name="Ren Q."/>
            <person name="Daugherty S.C."/>
            <person name="DeBoy R.T."/>
            <person name="Dodson R.J."/>
            <person name="Durkin A.S."/>
            <person name="Madupu R."/>
            <person name="Nelson W.C."/>
            <person name="Sullivan S.A."/>
            <person name="Rosovitz M.J."/>
            <person name="Haft D.H."/>
            <person name="Selengut J."/>
            <person name="Ward N."/>
        </authorList>
    </citation>
    <scope>NUCLEOTIDE SEQUENCE [LARGE SCALE GENOMIC DNA]</scope>
    <source>
        <strain>ATCC 700808 / DSM 15171 / DSS-3</strain>
    </source>
</reference>
<reference key="2">
    <citation type="journal article" date="2014" name="Stand. Genomic Sci.">
        <title>An updated genome annotation for the model marine bacterium Ruegeria pomeroyi DSS-3.</title>
        <authorList>
            <person name="Rivers A.R."/>
            <person name="Smith C.B."/>
            <person name="Moran M.A."/>
        </authorList>
    </citation>
    <scope>GENOME REANNOTATION</scope>
    <source>
        <strain>ATCC 700808 / DSM 15171 / DSS-3</strain>
    </source>
</reference>
<organism>
    <name type="scientific">Ruegeria pomeroyi (strain ATCC 700808 / DSM 15171 / DSS-3)</name>
    <name type="common">Silicibacter pomeroyi</name>
    <dbReference type="NCBI Taxonomy" id="246200"/>
    <lineage>
        <taxon>Bacteria</taxon>
        <taxon>Pseudomonadati</taxon>
        <taxon>Pseudomonadota</taxon>
        <taxon>Alphaproteobacteria</taxon>
        <taxon>Rhodobacterales</taxon>
        <taxon>Roseobacteraceae</taxon>
        <taxon>Ruegeria</taxon>
    </lineage>
</organism>
<protein>
    <recommendedName>
        <fullName evidence="1">Small ribosomal subunit protein uS3</fullName>
    </recommendedName>
    <alternativeName>
        <fullName evidence="3">30S ribosomal protein S3</fullName>
    </alternativeName>
</protein>
<name>RS3_RUEPO</name>
<proteinExistence type="inferred from homology"/>
<dbReference type="EMBL" id="CP000031">
    <property type="protein sequence ID" value="AAV93804.1"/>
    <property type="molecule type" value="Genomic_DNA"/>
</dbReference>
<dbReference type="RefSeq" id="WP_011046247.1">
    <property type="nucleotide sequence ID" value="NC_003911.12"/>
</dbReference>
<dbReference type="SMR" id="Q5LW56"/>
<dbReference type="STRING" id="246200.SPO0487"/>
<dbReference type="PaxDb" id="246200-SPO0487"/>
<dbReference type="KEGG" id="sil:SPO0487"/>
<dbReference type="eggNOG" id="COG0092">
    <property type="taxonomic scope" value="Bacteria"/>
</dbReference>
<dbReference type="HOGENOM" id="CLU_058591_0_2_5"/>
<dbReference type="OrthoDB" id="9806396at2"/>
<dbReference type="Proteomes" id="UP000001023">
    <property type="component" value="Chromosome"/>
</dbReference>
<dbReference type="GO" id="GO:0022627">
    <property type="term" value="C:cytosolic small ribosomal subunit"/>
    <property type="evidence" value="ECO:0007669"/>
    <property type="project" value="TreeGrafter"/>
</dbReference>
<dbReference type="GO" id="GO:0003729">
    <property type="term" value="F:mRNA binding"/>
    <property type="evidence" value="ECO:0007669"/>
    <property type="project" value="UniProtKB-UniRule"/>
</dbReference>
<dbReference type="GO" id="GO:0019843">
    <property type="term" value="F:rRNA binding"/>
    <property type="evidence" value="ECO:0007669"/>
    <property type="project" value="UniProtKB-UniRule"/>
</dbReference>
<dbReference type="GO" id="GO:0003735">
    <property type="term" value="F:structural constituent of ribosome"/>
    <property type="evidence" value="ECO:0007669"/>
    <property type="project" value="InterPro"/>
</dbReference>
<dbReference type="GO" id="GO:0006412">
    <property type="term" value="P:translation"/>
    <property type="evidence" value="ECO:0007669"/>
    <property type="project" value="UniProtKB-UniRule"/>
</dbReference>
<dbReference type="CDD" id="cd02412">
    <property type="entry name" value="KH-II_30S_S3"/>
    <property type="match status" value="1"/>
</dbReference>
<dbReference type="FunFam" id="3.30.1140.32:FF:000001">
    <property type="entry name" value="30S ribosomal protein S3"/>
    <property type="match status" value="1"/>
</dbReference>
<dbReference type="FunFam" id="3.30.300.20:FF:000001">
    <property type="entry name" value="30S ribosomal protein S3"/>
    <property type="match status" value="1"/>
</dbReference>
<dbReference type="Gene3D" id="3.30.300.20">
    <property type="match status" value="1"/>
</dbReference>
<dbReference type="Gene3D" id="3.30.1140.32">
    <property type="entry name" value="Ribosomal protein S3, C-terminal domain"/>
    <property type="match status" value="1"/>
</dbReference>
<dbReference type="HAMAP" id="MF_01309_B">
    <property type="entry name" value="Ribosomal_uS3_B"/>
    <property type="match status" value="1"/>
</dbReference>
<dbReference type="InterPro" id="IPR004087">
    <property type="entry name" value="KH_dom"/>
</dbReference>
<dbReference type="InterPro" id="IPR015946">
    <property type="entry name" value="KH_dom-like_a/b"/>
</dbReference>
<dbReference type="InterPro" id="IPR004044">
    <property type="entry name" value="KH_dom_type_2"/>
</dbReference>
<dbReference type="InterPro" id="IPR009019">
    <property type="entry name" value="KH_sf_prok-type"/>
</dbReference>
<dbReference type="InterPro" id="IPR036419">
    <property type="entry name" value="Ribosomal_S3_C_sf"/>
</dbReference>
<dbReference type="InterPro" id="IPR005704">
    <property type="entry name" value="Ribosomal_uS3_bac-typ"/>
</dbReference>
<dbReference type="InterPro" id="IPR001351">
    <property type="entry name" value="Ribosomal_uS3_C"/>
</dbReference>
<dbReference type="InterPro" id="IPR018280">
    <property type="entry name" value="Ribosomal_uS3_CS"/>
</dbReference>
<dbReference type="NCBIfam" id="TIGR01009">
    <property type="entry name" value="rpsC_bact"/>
    <property type="match status" value="1"/>
</dbReference>
<dbReference type="PANTHER" id="PTHR11760">
    <property type="entry name" value="30S/40S RIBOSOMAL PROTEIN S3"/>
    <property type="match status" value="1"/>
</dbReference>
<dbReference type="PANTHER" id="PTHR11760:SF19">
    <property type="entry name" value="SMALL RIBOSOMAL SUBUNIT PROTEIN US3C"/>
    <property type="match status" value="1"/>
</dbReference>
<dbReference type="Pfam" id="PF07650">
    <property type="entry name" value="KH_2"/>
    <property type="match status" value="1"/>
</dbReference>
<dbReference type="Pfam" id="PF00189">
    <property type="entry name" value="Ribosomal_S3_C"/>
    <property type="match status" value="1"/>
</dbReference>
<dbReference type="SMART" id="SM00322">
    <property type="entry name" value="KH"/>
    <property type="match status" value="1"/>
</dbReference>
<dbReference type="SUPFAM" id="SSF54814">
    <property type="entry name" value="Prokaryotic type KH domain (KH-domain type II)"/>
    <property type="match status" value="1"/>
</dbReference>
<dbReference type="SUPFAM" id="SSF54821">
    <property type="entry name" value="Ribosomal protein S3 C-terminal domain"/>
    <property type="match status" value="1"/>
</dbReference>
<dbReference type="PROSITE" id="PS50823">
    <property type="entry name" value="KH_TYPE_2"/>
    <property type="match status" value="1"/>
</dbReference>
<dbReference type="PROSITE" id="PS00548">
    <property type="entry name" value="RIBOSOMAL_S3"/>
    <property type="match status" value="1"/>
</dbReference>
<accession>Q5LW56</accession>
<sequence length="235" mass="26592">MGHKVNPIGMRLQVNRTWDSRWYADTKDYGNLLLEDLAIREFIKEECKQAGVARVIIERPHKKCRVTIHTARPGVIIGKKGADIETLRKKLANMTDSELHLNIVEVRKPEMDAQLVAESIAQQLERRVSFRRAMKRAVQNSMRMGALGIRVNVAGRLGGAEIARTEWYREGRVPLHTLRADIDYALAEASTPYGIIGIKVWIFKGEILEHDPQARDRKAQELQDGPAPRGAGGRR</sequence>
<keyword id="KW-1185">Reference proteome</keyword>
<keyword id="KW-0687">Ribonucleoprotein</keyword>
<keyword id="KW-0689">Ribosomal protein</keyword>
<keyword id="KW-0694">RNA-binding</keyword>
<keyword id="KW-0699">rRNA-binding</keyword>
<comment type="function">
    <text evidence="1">Binds the lower part of the 30S subunit head. Binds mRNA in the 70S ribosome, positioning it for translation.</text>
</comment>
<comment type="subunit">
    <text evidence="1">Part of the 30S ribosomal subunit. Forms a tight complex with proteins S10 and S14.</text>
</comment>
<comment type="similarity">
    <text evidence="1">Belongs to the universal ribosomal protein uS3 family.</text>
</comment>
<evidence type="ECO:0000255" key="1">
    <source>
        <dbReference type="HAMAP-Rule" id="MF_01309"/>
    </source>
</evidence>
<evidence type="ECO:0000256" key="2">
    <source>
        <dbReference type="SAM" id="MobiDB-lite"/>
    </source>
</evidence>
<evidence type="ECO:0000305" key="3"/>
<feature type="chain" id="PRO_0000130195" description="Small ribosomal subunit protein uS3">
    <location>
        <begin position="1"/>
        <end position="235"/>
    </location>
</feature>
<feature type="domain" description="KH type-2" evidence="1">
    <location>
        <begin position="39"/>
        <end position="107"/>
    </location>
</feature>
<feature type="region of interest" description="Disordered" evidence="2">
    <location>
        <begin position="213"/>
        <end position="235"/>
    </location>
</feature>